<keyword id="KW-0044">Antibiotic</keyword>
<keyword id="KW-0929">Antimicrobial</keyword>
<keyword id="KW-0903">Direct protein sequencing</keyword>
<reference evidence="3" key="1">
    <citation type="journal article" date="2009" name="J. Pept. Sci.">
        <title>Halocyntin and papillosin, two new antimicrobial peptides isolated from hemocytes of the solitary tunicate, Halocynthia papillosa.</title>
        <authorList>
            <person name="Galinier R."/>
            <person name="Roger E."/>
            <person name="Sautiere P.E."/>
            <person name="Aumelas A."/>
            <person name="Banaigs B."/>
            <person name="Mitta G."/>
        </authorList>
    </citation>
    <scope>PROTEIN SEQUENCE</scope>
    <scope>FUNCTION</scope>
    <scope>MASS SPECTROMETRY</scope>
    <source>
        <tissue evidence="1">Hemocyte</tissue>
    </source>
</reference>
<protein>
    <recommendedName>
        <fullName evidence="2">Papillosin</fullName>
    </recommendedName>
</protein>
<comment type="function">
    <text evidence="1">Has strong antibacterial activity against the Gram-positive bacteria M.luteus, S.aureus, B.megaterium, A.viridans and E.faecalis, and against the Gram-negative bacteria K.pneumoniae, E.coli DH5alpha, S.typhimurium, P.aeruginosa and E.aerogenes. Lacks hemolytic activity against sheep erythrocytes.</text>
</comment>
<comment type="mass spectrometry" mass="3318.44" method="MALDI" evidence="1"/>
<accession>P86416</accession>
<name>PAPIL_HALPP</name>
<organism>
    <name type="scientific">Halocynthia papillosa</name>
    <name type="common">Red sea-squirt</name>
    <dbReference type="NCBI Taxonomy" id="201963"/>
    <lineage>
        <taxon>Eukaryota</taxon>
        <taxon>Metazoa</taxon>
        <taxon>Chordata</taxon>
        <taxon>Tunicata</taxon>
        <taxon>Ascidiacea</taxon>
        <taxon>Stolidobranchia</taxon>
        <taxon>Pyuridae</taxon>
        <taxon>Halocynthia</taxon>
    </lineage>
</organism>
<dbReference type="GO" id="GO:0050829">
    <property type="term" value="P:defense response to Gram-negative bacterium"/>
    <property type="evidence" value="ECO:0000314"/>
    <property type="project" value="UniProtKB"/>
</dbReference>
<dbReference type="GO" id="GO:0050830">
    <property type="term" value="P:defense response to Gram-positive bacterium"/>
    <property type="evidence" value="ECO:0000314"/>
    <property type="project" value="UniProtKB"/>
</dbReference>
<sequence length="34" mass="3321">GFWKKVGSAAWGGVKAAAKGAAVGGLNALAKHIQ</sequence>
<feature type="peptide" id="PRO_0000390784" description="Papillosin" evidence="1">
    <location>
        <begin position="1"/>
        <end position="34"/>
    </location>
</feature>
<evidence type="ECO:0000269" key="1">
    <source>
    </source>
</evidence>
<evidence type="ECO:0000303" key="2">
    <source>
    </source>
</evidence>
<evidence type="ECO:0000305" key="3"/>
<proteinExistence type="evidence at protein level"/>